<organism>
    <name type="scientific">Desulfitobacterium hafniense (strain Y51)</name>
    <dbReference type="NCBI Taxonomy" id="138119"/>
    <lineage>
        <taxon>Bacteria</taxon>
        <taxon>Bacillati</taxon>
        <taxon>Bacillota</taxon>
        <taxon>Clostridia</taxon>
        <taxon>Eubacteriales</taxon>
        <taxon>Desulfitobacteriaceae</taxon>
        <taxon>Desulfitobacterium</taxon>
    </lineage>
</organism>
<dbReference type="EMBL" id="AP008230">
    <property type="protein sequence ID" value="BAE86076.1"/>
    <property type="molecule type" value="Genomic_DNA"/>
</dbReference>
<dbReference type="RefSeq" id="WP_011461735.1">
    <property type="nucleotide sequence ID" value="NC_007907.1"/>
</dbReference>
<dbReference type="SMR" id="Q24PG6"/>
<dbReference type="STRING" id="138119.DSY4287"/>
<dbReference type="KEGG" id="dsy:DSY4287"/>
<dbReference type="eggNOG" id="COG1489">
    <property type="taxonomic scope" value="Bacteria"/>
</dbReference>
<dbReference type="HOGENOM" id="CLU_052299_1_0_9"/>
<dbReference type="Proteomes" id="UP000001946">
    <property type="component" value="Chromosome"/>
</dbReference>
<dbReference type="GO" id="GO:0003677">
    <property type="term" value="F:DNA binding"/>
    <property type="evidence" value="ECO:0007669"/>
    <property type="project" value="InterPro"/>
</dbReference>
<dbReference type="CDD" id="cd22359">
    <property type="entry name" value="SfsA-like_bacterial"/>
    <property type="match status" value="1"/>
</dbReference>
<dbReference type="FunFam" id="2.40.50.580:FF:000002">
    <property type="entry name" value="Sugar fermentation stimulation protein homolog"/>
    <property type="match status" value="1"/>
</dbReference>
<dbReference type="Gene3D" id="2.40.50.580">
    <property type="match status" value="1"/>
</dbReference>
<dbReference type="Gene3D" id="3.40.1350.60">
    <property type="match status" value="1"/>
</dbReference>
<dbReference type="HAMAP" id="MF_00095">
    <property type="entry name" value="SfsA"/>
    <property type="match status" value="1"/>
</dbReference>
<dbReference type="InterPro" id="IPR005224">
    <property type="entry name" value="SfsA"/>
</dbReference>
<dbReference type="InterPro" id="IPR040452">
    <property type="entry name" value="SfsA_C"/>
</dbReference>
<dbReference type="InterPro" id="IPR041465">
    <property type="entry name" value="SfsA_N"/>
</dbReference>
<dbReference type="NCBIfam" id="TIGR00230">
    <property type="entry name" value="sfsA"/>
    <property type="match status" value="1"/>
</dbReference>
<dbReference type="PANTHER" id="PTHR30545">
    <property type="entry name" value="SUGAR FERMENTATION STIMULATION PROTEIN A"/>
    <property type="match status" value="1"/>
</dbReference>
<dbReference type="PANTHER" id="PTHR30545:SF2">
    <property type="entry name" value="SUGAR FERMENTATION STIMULATION PROTEIN A"/>
    <property type="match status" value="1"/>
</dbReference>
<dbReference type="Pfam" id="PF03749">
    <property type="entry name" value="SfsA"/>
    <property type="match status" value="1"/>
</dbReference>
<dbReference type="Pfam" id="PF17746">
    <property type="entry name" value="SfsA_N"/>
    <property type="match status" value="1"/>
</dbReference>
<name>SFSA_DESHY</name>
<comment type="similarity">
    <text evidence="1">Belongs to the SfsA family.</text>
</comment>
<evidence type="ECO:0000255" key="1">
    <source>
        <dbReference type="HAMAP-Rule" id="MF_00095"/>
    </source>
</evidence>
<sequence length="228" mass="26205">MKYTNIREGQFLSRPNRFIAKVEIDGKEEICHVKNTGRCRELLIPGVTVFLQEADFEHRKTKYDLIGVRKGNRLINMDSQVPNKVFCEWLEKGYFQELQHIKQEQTFRNSRFDFYLEAGQRKIFVEVKGVTLEEEGVALFPDAPTERGVKHLRELSQAVAAGYEAYVVFIIQMKDIHYFTPNIKTHQAFGDALIQADKQGVKILALDCEVTEDSIEAGDFVTVKLVEG</sequence>
<reference key="1">
    <citation type="journal article" date="2006" name="J. Bacteriol.">
        <title>Complete genome sequence of the dehalorespiring bacterium Desulfitobacterium hafniense Y51 and comparison with Dehalococcoides ethenogenes 195.</title>
        <authorList>
            <person name="Nonaka H."/>
            <person name="Keresztes G."/>
            <person name="Shinoda Y."/>
            <person name="Ikenaga Y."/>
            <person name="Abe M."/>
            <person name="Naito K."/>
            <person name="Inatomi K."/>
            <person name="Furukawa K."/>
            <person name="Inui M."/>
            <person name="Yukawa H."/>
        </authorList>
    </citation>
    <scope>NUCLEOTIDE SEQUENCE [LARGE SCALE GENOMIC DNA]</scope>
    <source>
        <strain>Y51</strain>
    </source>
</reference>
<gene>
    <name evidence="1" type="primary">sfsA</name>
    <name type="ordered locus">DSY4287</name>
</gene>
<keyword id="KW-1185">Reference proteome</keyword>
<proteinExistence type="inferred from homology"/>
<protein>
    <recommendedName>
        <fullName evidence="1">Sugar fermentation stimulation protein homolog</fullName>
    </recommendedName>
</protein>
<feature type="chain" id="PRO_0000340137" description="Sugar fermentation stimulation protein homolog">
    <location>
        <begin position="1"/>
        <end position="228"/>
    </location>
</feature>
<accession>Q24PG6</accession>